<proteinExistence type="evidence at protein level"/>
<name>SWP82_YEAST</name>
<comment type="function">
    <text>Involved in transcriptional activation. Component of the SWI/SNF complex, an ATP-dependent chromatin remodeling complex, which is required for the positive and negative regulation of gene expression of a large number of genes. It changes chromatin structure by altering DNA-histone contacts within a nucleosome, leading eventually to a change in nucleosome position, thus facilitating or repressing binding of gene-specific transcription factors.</text>
</comment>
<comment type="subunit">
    <text evidence="3">Interacts with SWI3 and SNF12. Component of the SWI/SNF global transcription activator complex. The 1.14 MDa SWI/SNF complex is composed of 11 different subunits: one copy each of SWI1, SNF2/SWI2, SNF5, SNF12/SWP73, ARP7/SWP61, ARP9/SWP59; two copies each of SWI3, SNF6, SNF11, SWP82; and three copies of TAF14/SWP29.</text>
</comment>
<comment type="subcellular location">
    <subcellularLocation>
        <location evidence="1">Nucleus</location>
    </subcellularLocation>
</comment>
<comment type="miscellaneous">
    <text evidence="2">Present with 3180 molecules/cell in log phase SD medium.</text>
</comment>
<comment type="similarity">
    <text evidence="4">Belongs to the RSC7/SWP82 family. SWP82 subfamily.</text>
</comment>
<accession>P43554</accession>
<accession>D6VTI1</accession>
<organism>
    <name type="scientific">Saccharomyces cerevisiae (strain ATCC 204508 / S288c)</name>
    <name type="common">Baker's yeast</name>
    <dbReference type="NCBI Taxonomy" id="559292"/>
    <lineage>
        <taxon>Eukaryota</taxon>
        <taxon>Fungi</taxon>
        <taxon>Dikarya</taxon>
        <taxon>Ascomycota</taxon>
        <taxon>Saccharomycotina</taxon>
        <taxon>Saccharomycetes</taxon>
        <taxon>Saccharomycetales</taxon>
        <taxon>Saccharomycetaceae</taxon>
        <taxon>Saccharomyces</taxon>
    </lineage>
</organism>
<gene>
    <name type="primary">SWP82</name>
    <name type="ordered locus">YFL049W</name>
</gene>
<protein>
    <recommendedName>
        <fullName>SWI/SNF global transcription activator complex subunit SWP82</fullName>
    </recommendedName>
</protein>
<evidence type="ECO:0000269" key="1">
    <source>
    </source>
</evidence>
<evidence type="ECO:0000269" key="2">
    <source>
    </source>
</evidence>
<evidence type="ECO:0000269" key="3">
    <source>
    </source>
</evidence>
<evidence type="ECO:0000305" key="4"/>
<evidence type="ECO:0007829" key="5">
    <source>
        <dbReference type="PDB" id="7C4J"/>
    </source>
</evidence>
<feature type="chain" id="PRO_0000076350" description="SWI/SNF global transcription activator complex subunit SWP82">
    <location>
        <begin position="1"/>
        <end position="623"/>
    </location>
</feature>
<feature type="helix" evidence="5">
    <location>
        <begin position="32"/>
        <end position="49"/>
    </location>
</feature>
<feature type="strand" evidence="5">
    <location>
        <begin position="53"/>
        <end position="56"/>
    </location>
</feature>
<feature type="helix" evidence="5">
    <location>
        <begin position="122"/>
        <end position="130"/>
    </location>
</feature>
<feature type="helix" evidence="5">
    <location>
        <begin position="188"/>
        <end position="194"/>
    </location>
</feature>
<feature type="helix" evidence="5">
    <location>
        <begin position="196"/>
        <end position="198"/>
    </location>
</feature>
<feature type="strand" evidence="5">
    <location>
        <begin position="200"/>
        <end position="202"/>
    </location>
</feature>
<feature type="strand" evidence="5">
    <location>
        <begin position="205"/>
        <end position="210"/>
    </location>
</feature>
<feature type="helix" evidence="5">
    <location>
        <begin position="231"/>
        <end position="240"/>
    </location>
</feature>
<feature type="helix" evidence="5">
    <location>
        <begin position="283"/>
        <end position="295"/>
    </location>
</feature>
<feature type="strand" evidence="5">
    <location>
        <begin position="316"/>
        <end position="318"/>
    </location>
</feature>
<feature type="helix" evidence="5">
    <location>
        <begin position="328"/>
        <end position="334"/>
    </location>
</feature>
<feature type="strand" evidence="5">
    <location>
        <begin position="443"/>
        <end position="446"/>
    </location>
</feature>
<feature type="helix" evidence="5">
    <location>
        <begin position="451"/>
        <end position="460"/>
    </location>
</feature>
<feature type="helix" evidence="5">
    <location>
        <begin position="463"/>
        <end position="465"/>
    </location>
</feature>
<feature type="helix" evidence="5">
    <location>
        <begin position="466"/>
        <end position="501"/>
    </location>
</feature>
<feature type="helix" evidence="5">
    <location>
        <begin position="512"/>
        <end position="524"/>
    </location>
</feature>
<feature type="strand" evidence="5">
    <location>
        <begin position="551"/>
        <end position="553"/>
    </location>
</feature>
<reference key="1">
    <citation type="journal article" date="1995" name="Nat. Genet.">
        <title>Analysis of the nucleotide sequence of chromosome VI from Saccharomyces cerevisiae.</title>
        <authorList>
            <person name="Murakami Y."/>
            <person name="Naitou M."/>
            <person name="Hagiwara H."/>
            <person name="Shibata T."/>
            <person name="Ozawa M."/>
            <person name="Sasanuma S."/>
            <person name="Sasanuma M."/>
            <person name="Tsuchiya Y."/>
            <person name="Soeda E."/>
            <person name="Yokoyama K."/>
            <person name="Yamazaki M."/>
            <person name="Tashiro H."/>
            <person name="Eki T."/>
        </authorList>
    </citation>
    <scope>NUCLEOTIDE SEQUENCE [LARGE SCALE GENOMIC DNA]</scope>
    <source>
        <strain>ATCC 204508 / S288c</strain>
    </source>
</reference>
<reference key="2">
    <citation type="journal article" date="2014" name="G3 (Bethesda)">
        <title>The reference genome sequence of Saccharomyces cerevisiae: Then and now.</title>
        <authorList>
            <person name="Engel S.R."/>
            <person name="Dietrich F.S."/>
            <person name="Fisk D.G."/>
            <person name="Binkley G."/>
            <person name="Balakrishnan R."/>
            <person name="Costanzo M.C."/>
            <person name="Dwight S.S."/>
            <person name="Hitz B.C."/>
            <person name="Karra K."/>
            <person name="Nash R.S."/>
            <person name="Weng S."/>
            <person name="Wong E.D."/>
            <person name="Lloyd P."/>
            <person name="Skrzypek M.S."/>
            <person name="Miyasato S.R."/>
            <person name="Simison M."/>
            <person name="Cherry J.M."/>
        </authorList>
    </citation>
    <scope>GENOME REANNOTATION</scope>
    <source>
        <strain>ATCC 204508 / S288c</strain>
    </source>
</reference>
<reference key="3">
    <citation type="journal article" date="2003" name="Nature">
        <title>Global analysis of protein localization in budding yeast.</title>
        <authorList>
            <person name="Huh W.-K."/>
            <person name="Falvo J.V."/>
            <person name="Gerke L.C."/>
            <person name="Carroll A.S."/>
            <person name="Howson R.W."/>
            <person name="Weissman J.S."/>
            <person name="O'Shea E.K."/>
        </authorList>
    </citation>
    <scope>SUBCELLULAR LOCATION [LARGE SCALE ANALYSIS]</scope>
</reference>
<reference key="4">
    <citation type="journal article" date="2003" name="Nature">
        <title>Global analysis of protein expression in yeast.</title>
        <authorList>
            <person name="Ghaemmaghami S."/>
            <person name="Huh W.-K."/>
            <person name="Bower K."/>
            <person name="Howson R.W."/>
            <person name="Belle A."/>
            <person name="Dephoure N."/>
            <person name="O'Shea E.K."/>
            <person name="Weissman J.S."/>
        </authorList>
    </citation>
    <scope>LEVEL OF PROTEIN EXPRESSION [LARGE SCALE ANALYSIS]</scope>
</reference>
<reference key="5">
    <citation type="journal article" date="2003" name="Nat. Struct. Biol.">
        <title>Structural analysis of the yeast SWI/SNF chromatin remodeling complex.</title>
        <authorList>
            <person name="Smith C.L."/>
            <person name="Horowitz-Scherer R."/>
            <person name="Flanagan J.F."/>
            <person name="Woodcock C.L."/>
            <person name="Peterson C.L."/>
        </authorList>
    </citation>
    <scope>3D-STRUCTURE MODELING OF THE SWI/SNF COMPLEX</scope>
    <scope>ELECTRON MICROSCOPY OF THE SWI/SNF COMPLEX</scope>
</reference>
<reference key="6">
    <citation type="journal article" date="2006" name="Genetics">
        <title>The RSC chromatin remodeling complex bears an essential fungal-specific protein module with broad functional roles.</title>
        <authorList>
            <person name="Wilson B."/>
            <person name="Erdjument-Bromage H."/>
            <person name="Tempst P."/>
            <person name="Cairns B.R."/>
        </authorList>
    </citation>
    <scope>IDENTIFICATION IN THE SWI/SNF COMPLEX</scope>
    <scope>INTERACTION WITH SWI3 AND SNF12</scope>
</reference>
<dbReference type="EMBL" id="D50617">
    <property type="protein sequence ID" value="BAA09192.1"/>
    <property type="molecule type" value="Genomic_DNA"/>
</dbReference>
<dbReference type="EMBL" id="BK006940">
    <property type="protein sequence ID" value="DAA12391.1"/>
    <property type="molecule type" value="Genomic_DNA"/>
</dbReference>
<dbReference type="PIR" id="S56206">
    <property type="entry name" value="S56206"/>
</dbReference>
<dbReference type="RefSeq" id="NP_116605.1">
    <property type="nucleotide sequence ID" value="NM_001179918.1"/>
</dbReference>
<dbReference type="PDB" id="7C4J">
    <property type="method" value="EM"/>
    <property type="resolution" value="2.89 A"/>
    <property type="chains" value="E=1-623"/>
</dbReference>
<dbReference type="PDB" id="7EGM">
    <property type="method" value="EM"/>
    <property type="resolution" value="3.60 A"/>
    <property type="chains" value="J=1-623"/>
</dbReference>
<dbReference type="PDB" id="7EGP">
    <property type="method" value="EM"/>
    <property type="resolution" value="6.90 A"/>
    <property type="chains" value="J=1-623"/>
</dbReference>
<dbReference type="PDBsum" id="7C4J"/>
<dbReference type="PDBsum" id="7EGM"/>
<dbReference type="PDBsum" id="7EGP"/>
<dbReference type="EMDB" id="EMD-30285"/>
<dbReference type="EMDB" id="EMD-31136"/>
<dbReference type="EMDB" id="EMD-31137"/>
<dbReference type="SMR" id="P43554"/>
<dbReference type="BioGRID" id="31098">
    <property type="interactions" value="170"/>
</dbReference>
<dbReference type="ComplexPortal" id="CPX-1150">
    <property type="entry name" value="SWI/SNF chromatin remodelling complex"/>
</dbReference>
<dbReference type="DIP" id="DIP-4202N"/>
<dbReference type="FunCoup" id="P43554">
    <property type="interactions" value="237"/>
</dbReference>
<dbReference type="IntAct" id="P43554">
    <property type="interactions" value="22"/>
</dbReference>
<dbReference type="MINT" id="P43554"/>
<dbReference type="STRING" id="4932.YFL049W"/>
<dbReference type="iPTMnet" id="P43554"/>
<dbReference type="PaxDb" id="4932-YFL049W"/>
<dbReference type="PeptideAtlas" id="P43554"/>
<dbReference type="EnsemblFungi" id="YFL049W_mRNA">
    <property type="protein sequence ID" value="YFL049W"/>
    <property type="gene ID" value="YFL049W"/>
</dbReference>
<dbReference type="GeneID" id="850495"/>
<dbReference type="KEGG" id="sce:YFL049W"/>
<dbReference type="AGR" id="SGD:S000001845"/>
<dbReference type="SGD" id="S000001845">
    <property type="gene designation" value="SWP82"/>
</dbReference>
<dbReference type="VEuPathDB" id="FungiDB:YFL049W"/>
<dbReference type="eggNOG" id="ENOG502QVDZ">
    <property type="taxonomic scope" value="Eukaryota"/>
</dbReference>
<dbReference type="HOGENOM" id="CLU_493537_0_0_1"/>
<dbReference type="InParanoid" id="P43554"/>
<dbReference type="OMA" id="YWQYKAG"/>
<dbReference type="OrthoDB" id="5598844at2759"/>
<dbReference type="BioCyc" id="YEAST:G3O-30416-MONOMER"/>
<dbReference type="Reactome" id="R-SCE-4551638">
    <property type="pathway name" value="SUMOylation of chromatin organization proteins"/>
</dbReference>
<dbReference type="BioGRID-ORCS" id="850495">
    <property type="hits" value="1 hit in 10 CRISPR screens"/>
</dbReference>
<dbReference type="PRO" id="PR:P43554"/>
<dbReference type="Proteomes" id="UP000002311">
    <property type="component" value="Chromosome VI"/>
</dbReference>
<dbReference type="RNAct" id="P43554">
    <property type="molecule type" value="protein"/>
</dbReference>
<dbReference type="GO" id="GO:0000785">
    <property type="term" value="C:chromatin"/>
    <property type="evidence" value="ECO:0000303"/>
    <property type="project" value="ComplexPortal"/>
</dbReference>
<dbReference type="GO" id="GO:0005829">
    <property type="term" value="C:cytosol"/>
    <property type="evidence" value="ECO:0000314"/>
    <property type="project" value="SGD"/>
</dbReference>
<dbReference type="GO" id="GO:0005634">
    <property type="term" value="C:nucleus"/>
    <property type="evidence" value="ECO:0000314"/>
    <property type="project" value="SGD"/>
</dbReference>
<dbReference type="GO" id="GO:0016586">
    <property type="term" value="C:RSC-type complex"/>
    <property type="evidence" value="ECO:0000318"/>
    <property type="project" value="GO_Central"/>
</dbReference>
<dbReference type="GO" id="GO:0016514">
    <property type="term" value="C:SWI/SNF complex"/>
    <property type="evidence" value="ECO:0000314"/>
    <property type="project" value="UniProtKB"/>
</dbReference>
<dbReference type="GO" id="GO:0031490">
    <property type="term" value="F:chromatin DNA binding"/>
    <property type="evidence" value="ECO:0000318"/>
    <property type="project" value="GO_Central"/>
</dbReference>
<dbReference type="GO" id="GO:0006338">
    <property type="term" value="P:chromatin remodeling"/>
    <property type="evidence" value="ECO:0000314"/>
    <property type="project" value="ComplexPortal"/>
</dbReference>
<dbReference type="GO" id="GO:0006357">
    <property type="term" value="P:regulation of transcription by RNA polymerase II"/>
    <property type="evidence" value="ECO:0000314"/>
    <property type="project" value="ComplexPortal"/>
</dbReference>
<dbReference type="InterPro" id="IPR013933">
    <property type="entry name" value="CRC_Rsc7/Swp82"/>
</dbReference>
<dbReference type="Pfam" id="PF08624">
    <property type="entry name" value="CRC_subunit"/>
    <property type="match status" value="1"/>
</dbReference>
<keyword id="KW-0002">3D-structure</keyword>
<keyword id="KW-0010">Activator</keyword>
<keyword id="KW-0156">Chromatin regulator</keyword>
<keyword id="KW-0539">Nucleus</keyword>
<keyword id="KW-1185">Reference proteome</keyword>
<keyword id="KW-0804">Transcription</keyword>
<keyword id="KW-0805">Transcription regulation</keyword>
<sequence>MLGEDEGNTVLEKGNNPSVKQGEVGAVFIVPKILIREHERVILKQILQILDQDELVQPPLDKFPYKKLELPKYIDELKTRDATNTSYKMIQLDAYGEKKVGSNGELFGGRHYLFNTFTFTAHMGVLLVLLQDVIKVLYQSNATHDEDEFIVQHDQILVMETSEEQTKFLAKNGVIPEESKGSFKYITARSAFVEFGASVIAGGQRIVDDYWESLAKKQNLSSHQRVFKLSTNLISKISLLRPSFQNNRISNANEISANTNNTCTISTSKFESQYPIVTEQPSAEIREAYIENFAKGEHISAIVPGQSISGTLELSAQFRVPRYHSKNSFQQALQMKAMDIPIGRHEELLAQYESQAPDGSASISLPNHIPSVNPSNKPIKRMLSSILDINVSSSKNKKSEENEMIKPMNKGQHKNNTSLNINGWKFESLPLKSAENSGKQQYYRGLPLYEKNTLLERLKQLTPNEIKELEHLHDAVFVNTGLQNVRKVRTKKWKKYWQYKAGIPIGLKRSQLDEFKNKYLKDVLAQTSVTTNFNEITNTDETITTKRVPNPNFLGNCNIKDFKPPYIYSHVNKVPQNVAGDKTAVKLDTEVKNTNANPVVATDPVAAKPDNLANFSNEVAMNN</sequence>